<feature type="chain" id="PRO_0000403534" description="Flap endonuclease 1-1">
    <location>
        <begin position="1"/>
        <end position="390"/>
    </location>
</feature>
<feature type="region of interest" description="N-domain">
    <location>
        <begin position="1"/>
        <end position="108"/>
    </location>
</feature>
<feature type="region of interest" description="I-domain">
    <location>
        <begin position="126"/>
        <end position="254"/>
    </location>
</feature>
<feature type="region of interest" description="Interaction with PCNA" evidence="1">
    <location>
        <begin position="348"/>
        <end position="356"/>
    </location>
</feature>
<feature type="region of interest" description="Disordered" evidence="2">
    <location>
        <begin position="359"/>
        <end position="390"/>
    </location>
</feature>
<feature type="binding site" evidence="1">
    <location>
        <position position="34"/>
    </location>
    <ligand>
        <name>Mg(2+)</name>
        <dbReference type="ChEBI" id="CHEBI:18420"/>
        <label>1</label>
    </ligand>
</feature>
<feature type="binding site" evidence="1">
    <location>
        <position position="74"/>
    </location>
    <ligand>
        <name>DNA</name>
        <dbReference type="ChEBI" id="CHEBI:16991"/>
    </ligand>
</feature>
<feature type="binding site" evidence="1">
    <location>
        <position position="90"/>
    </location>
    <ligand>
        <name>Mg(2+)</name>
        <dbReference type="ChEBI" id="CHEBI:18420"/>
        <label>1</label>
    </ligand>
</feature>
<feature type="binding site" evidence="1">
    <location>
        <position position="162"/>
    </location>
    <ligand>
        <name>DNA</name>
        <dbReference type="ChEBI" id="CHEBI:16991"/>
    </ligand>
</feature>
<feature type="binding site" evidence="1">
    <location>
        <position position="162"/>
    </location>
    <ligand>
        <name>Mg(2+)</name>
        <dbReference type="ChEBI" id="CHEBI:18420"/>
        <label>1</label>
    </ligand>
</feature>
<feature type="binding site" evidence="1">
    <location>
        <position position="164"/>
    </location>
    <ligand>
        <name>Mg(2+)</name>
        <dbReference type="ChEBI" id="CHEBI:18420"/>
        <label>1</label>
    </ligand>
</feature>
<feature type="binding site" evidence="1">
    <location>
        <position position="183"/>
    </location>
    <ligand>
        <name>Mg(2+)</name>
        <dbReference type="ChEBI" id="CHEBI:18420"/>
        <label>2</label>
    </ligand>
</feature>
<feature type="binding site" evidence="1">
    <location>
        <position position="185"/>
    </location>
    <ligand>
        <name>Mg(2+)</name>
        <dbReference type="ChEBI" id="CHEBI:18420"/>
        <label>2</label>
    </ligand>
</feature>
<feature type="binding site" evidence="1">
    <location>
        <position position="232"/>
    </location>
    <ligand>
        <name>DNA</name>
        <dbReference type="ChEBI" id="CHEBI:16991"/>
    </ligand>
</feature>
<feature type="binding site" evidence="1">
    <location>
        <position position="234"/>
    </location>
    <ligand>
        <name>DNA</name>
        <dbReference type="ChEBI" id="CHEBI:16991"/>
    </ligand>
</feature>
<feature type="binding site" evidence="1">
    <location>
        <position position="234"/>
    </location>
    <ligand>
        <name>Mg(2+)</name>
        <dbReference type="ChEBI" id="CHEBI:18420"/>
        <label>2</label>
    </ligand>
</feature>
<sequence length="390" mass="44355">MGIHQLMQFLKEKAPNCFRTLMLDYFAGRTIGCDASMAMYQFLIQTQSAGQTQIIELTDKDGNRTGHLVGLFNRTLQFLENGIKPVWVFDGKPPLLKSGELARRKKLKEEAQVKTELALEQGDMQQALLQHQRTTTISSVMKEDAIKMLKLMGCPVIIAPCEAEAQCAELCRAGKIYATATEDMDALTFRTPVLLRGFNTKKEPIYEIIYDDMMKELEITYEQFVDLCILCGCDYTEKIEGIGPGTAYKLIKEFKSIEGILEHVQKVNAEREKNKQNPKYTVPTKFLYQDSRELFITPLVQKGEEIQLTWNKPDVENLKKFLVEEKGFAESRIDNGLKRIAKKDTTGFQSRLENFFGKTTKIIHPNNSKAKGKANKKNEQTQKSGGKKKI</sequence>
<evidence type="ECO:0000255" key="1">
    <source>
        <dbReference type="HAMAP-Rule" id="MF_03140"/>
    </source>
</evidence>
<evidence type="ECO:0000256" key="2">
    <source>
        <dbReference type="SAM" id="MobiDB-lite"/>
    </source>
</evidence>
<keyword id="KW-0227">DNA damage</keyword>
<keyword id="KW-0234">DNA repair</keyword>
<keyword id="KW-0235">DNA replication</keyword>
<keyword id="KW-0255">Endonuclease</keyword>
<keyword id="KW-0269">Exonuclease</keyword>
<keyword id="KW-0378">Hydrolase</keyword>
<keyword id="KW-0460">Magnesium</keyword>
<keyword id="KW-0479">Metal-binding</keyword>
<keyword id="KW-0496">Mitochondrion</keyword>
<keyword id="KW-0540">Nuclease</keyword>
<keyword id="KW-0539">Nucleus</keyword>
<keyword id="KW-0597">Phosphoprotein</keyword>
<keyword id="KW-1185">Reference proteome</keyword>
<accession>A0CXT3</accession>
<organism>
    <name type="scientific">Paramecium tetraurelia</name>
    <dbReference type="NCBI Taxonomy" id="5888"/>
    <lineage>
        <taxon>Eukaryota</taxon>
        <taxon>Sar</taxon>
        <taxon>Alveolata</taxon>
        <taxon>Ciliophora</taxon>
        <taxon>Intramacronucleata</taxon>
        <taxon>Oligohymenophorea</taxon>
        <taxon>Peniculida</taxon>
        <taxon>Parameciidae</taxon>
        <taxon>Paramecium</taxon>
    </lineage>
</organism>
<proteinExistence type="inferred from homology"/>
<comment type="function">
    <text evidence="1">Structure-specific nuclease with 5'-flap endonuclease and 5'-3' exonuclease activities involved in DNA replication and repair. During DNA replication, cleaves the 5'-overhanging flap structure that is generated by displacement synthesis when DNA polymerase encounters the 5'-end of a downstream Okazaki fragment. It enters the flap from the 5'-end and then tracks to cleave the flap base, leaving a nick for ligation. Also involved in the long patch base excision repair (LP-BER) pathway, by cleaving within the apurinic/apyrimidinic (AP) site-terminated flap. Acts as a genome stabilization factor that prevents flaps from equilibrating into structures that lead to duplications and deletions. Also possesses 5'-3' exonuclease activity on nicked or gapped double-stranded DNA, and exhibits RNase H activity. Also involved in replication and repair of rDNA and in repairing mitochondrial DNA.</text>
</comment>
<comment type="cofactor">
    <cofactor evidence="1">
        <name>Mg(2+)</name>
        <dbReference type="ChEBI" id="CHEBI:18420"/>
    </cofactor>
    <text evidence="1">Binds 2 magnesium ions per subunit. They probably participate in the reaction catalyzed by the enzyme. May bind an additional third magnesium ion after substrate binding.</text>
</comment>
<comment type="subunit">
    <text evidence="1">Interacts with PCNA. Three molecules of FEN1 bind to one PCNA trimer with each molecule binding to one PCNA monomer. PCNA stimulates the nuclease activity without altering cleavage specificity.</text>
</comment>
<comment type="subcellular location">
    <subcellularLocation>
        <location evidence="1">Nucleus</location>
        <location evidence="1">Nucleolus</location>
    </subcellularLocation>
    <subcellularLocation>
        <location evidence="1">Nucleus</location>
        <location evidence="1">Nucleoplasm</location>
    </subcellularLocation>
    <subcellularLocation>
        <location evidence="1">Mitochondrion</location>
    </subcellularLocation>
    <text evidence="1">Resides mostly in the nucleoli and relocalizes to the nucleoplasm upon DNA damage.</text>
</comment>
<comment type="PTM">
    <text evidence="1">Phosphorylated. Phosphorylation upon DNA damage induces relocalization to the nuclear plasma.</text>
</comment>
<comment type="similarity">
    <text evidence="1">Belongs to the XPG/RAD2 endonuclease family. FEN1 subfamily.</text>
</comment>
<gene>
    <name evidence="1" type="primary">FEN1-1</name>
    <name type="ORF">GSPATT00011232001</name>
</gene>
<name>FEN11_PARTE</name>
<protein>
    <recommendedName>
        <fullName evidence="1">Flap endonuclease 1-1</fullName>
        <shortName evidence="1">FEN-1-1</shortName>
        <ecNumber evidence="1">3.1.-.-</ecNumber>
    </recommendedName>
    <alternativeName>
        <fullName evidence="1">Flap structure-specific endonuclease 1-1</fullName>
    </alternativeName>
</protein>
<reference key="1">
    <citation type="journal article" date="2006" name="Nature">
        <title>Global trends of whole-genome duplications revealed by the ciliate Paramecium tetraurelia.</title>
        <authorList>
            <person name="Aury J.-M."/>
            <person name="Jaillon O."/>
            <person name="Duret L."/>
            <person name="Noel B."/>
            <person name="Jubin C."/>
            <person name="Porcel B.M."/>
            <person name="Segurens B."/>
            <person name="Daubin V."/>
            <person name="Anthouard V."/>
            <person name="Aiach N."/>
            <person name="Arnaiz O."/>
            <person name="Billaut A."/>
            <person name="Beisson J."/>
            <person name="Blanc I."/>
            <person name="Bouhouche K."/>
            <person name="Camara F."/>
            <person name="Duharcourt S."/>
            <person name="Guigo R."/>
            <person name="Gogendeau D."/>
            <person name="Katinka M."/>
            <person name="Keller A.-M."/>
            <person name="Kissmehl R."/>
            <person name="Klotz C."/>
            <person name="Koll F."/>
            <person name="Le Mouel A."/>
            <person name="Lepere G."/>
            <person name="Malinsky S."/>
            <person name="Nowacki M."/>
            <person name="Nowak J.K."/>
            <person name="Plattner H."/>
            <person name="Poulain J."/>
            <person name="Ruiz F."/>
            <person name="Serrano V."/>
            <person name="Zagulski M."/>
            <person name="Dessen P."/>
            <person name="Betermier M."/>
            <person name="Weissenbach J."/>
            <person name="Scarpelli C."/>
            <person name="Schaechter V."/>
            <person name="Sperling L."/>
            <person name="Meyer E."/>
            <person name="Cohen J."/>
            <person name="Wincker P."/>
        </authorList>
    </citation>
    <scope>NUCLEOTIDE SEQUENCE [LARGE SCALE GENOMIC DNA]</scope>
    <source>
        <strain>Stock d4-2</strain>
    </source>
</reference>
<dbReference type="EC" id="3.1.-.-" evidence="1"/>
<dbReference type="EMBL" id="CT868208">
    <property type="protein sequence ID" value="CAK75600.1"/>
    <property type="molecule type" value="Genomic_DNA"/>
</dbReference>
<dbReference type="RefSeq" id="XP_001442997.1">
    <property type="nucleotide sequence ID" value="XM_001442960.1"/>
</dbReference>
<dbReference type="SMR" id="A0CXT3"/>
<dbReference type="FunCoup" id="A0CXT3">
    <property type="interactions" value="1328"/>
</dbReference>
<dbReference type="STRING" id="5888.A0CXT3"/>
<dbReference type="EnsemblProtists" id="CAK75600">
    <property type="protein sequence ID" value="CAK75600"/>
    <property type="gene ID" value="GSPATT00011232001"/>
</dbReference>
<dbReference type="GeneID" id="5028782"/>
<dbReference type="KEGG" id="ptm:GSPATT00011232001"/>
<dbReference type="eggNOG" id="KOG2519">
    <property type="taxonomic scope" value="Eukaryota"/>
</dbReference>
<dbReference type="HOGENOM" id="CLU_032444_2_0_1"/>
<dbReference type="InParanoid" id="A0CXT3"/>
<dbReference type="OMA" id="MGIPWVQ"/>
<dbReference type="OrthoDB" id="1937206at2759"/>
<dbReference type="Proteomes" id="UP000000600">
    <property type="component" value="Partially assembled WGS sequence"/>
</dbReference>
<dbReference type="GO" id="GO:0005739">
    <property type="term" value="C:mitochondrion"/>
    <property type="evidence" value="ECO:0007669"/>
    <property type="project" value="UniProtKB-SubCell"/>
</dbReference>
<dbReference type="GO" id="GO:0005730">
    <property type="term" value="C:nucleolus"/>
    <property type="evidence" value="ECO:0007669"/>
    <property type="project" value="UniProtKB-SubCell"/>
</dbReference>
<dbReference type="GO" id="GO:0005654">
    <property type="term" value="C:nucleoplasm"/>
    <property type="evidence" value="ECO:0007669"/>
    <property type="project" value="UniProtKB-SubCell"/>
</dbReference>
<dbReference type="GO" id="GO:0008409">
    <property type="term" value="F:5'-3' exonuclease activity"/>
    <property type="evidence" value="ECO:0000318"/>
    <property type="project" value="GO_Central"/>
</dbReference>
<dbReference type="GO" id="GO:0017108">
    <property type="term" value="F:5'-flap endonuclease activity"/>
    <property type="evidence" value="ECO:0000318"/>
    <property type="project" value="GO_Central"/>
</dbReference>
<dbReference type="GO" id="GO:0003677">
    <property type="term" value="F:DNA binding"/>
    <property type="evidence" value="ECO:0007669"/>
    <property type="project" value="UniProtKB-UniRule"/>
</dbReference>
<dbReference type="GO" id="GO:0000287">
    <property type="term" value="F:magnesium ion binding"/>
    <property type="evidence" value="ECO:0007669"/>
    <property type="project" value="UniProtKB-UniRule"/>
</dbReference>
<dbReference type="GO" id="GO:0006284">
    <property type="term" value="P:base-excision repair"/>
    <property type="evidence" value="ECO:0007669"/>
    <property type="project" value="UniProtKB-UniRule"/>
</dbReference>
<dbReference type="GO" id="GO:0043137">
    <property type="term" value="P:DNA replication, removal of RNA primer"/>
    <property type="evidence" value="ECO:0007669"/>
    <property type="project" value="UniProtKB-UniRule"/>
</dbReference>
<dbReference type="CDD" id="cd09907">
    <property type="entry name" value="H3TH_FEN1-Euk"/>
    <property type="match status" value="1"/>
</dbReference>
<dbReference type="CDD" id="cd09867">
    <property type="entry name" value="PIN_FEN1"/>
    <property type="match status" value="1"/>
</dbReference>
<dbReference type="FunFam" id="1.10.150.20:FF:000009">
    <property type="entry name" value="Flap endonuclease 1"/>
    <property type="match status" value="1"/>
</dbReference>
<dbReference type="FunFam" id="3.40.50.1010:FF:000138">
    <property type="entry name" value="Flap endonuclease 1-1"/>
    <property type="match status" value="1"/>
</dbReference>
<dbReference type="Gene3D" id="1.10.150.20">
    <property type="entry name" value="5' to 3' exonuclease, C-terminal subdomain"/>
    <property type="match status" value="1"/>
</dbReference>
<dbReference type="Gene3D" id="3.40.50.1010">
    <property type="entry name" value="5'-nuclease"/>
    <property type="match status" value="1"/>
</dbReference>
<dbReference type="HAMAP" id="MF_00614">
    <property type="entry name" value="Fen"/>
    <property type="match status" value="1"/>
</dbReference>
<dbReference type="InterPro" id="IPR036279">
    <property type="entry name" value="5-3_exonuclease_C_sf"/>
</dbReference>
<dbReference type="InterPro" id="IPR023426">
    <property type="entry name" value="Flap_endonuc"/>
</dbReference>
<dbReference type="InterPro" id="IPR008918">
    <property type="entry name" value="HhH2"/>
</dbReference>
<dbReference type="InterPro" id="IPR029060">
    <property type="entry name" value="PIN-like_dom_sf"/>
</dbReference>
<dbReference type="InterPro" id="IPR006086">
    <property type="entry name" value="XPG-I_dom"/>
</dbReference>
<dbReference type="InterPro" id="IPR006084">
    <property type="entry name" value="XPG/Rad2"/>
</dbReference>
<dbReference type="InterPro" id="IPR006085">
    <property type="entry name" value="XPG_DNA_repair_N"/>
</dbReference>
<dbReference type="PANTHER" id="PTHR11081:SF9">
    <property type="entry name" value="FLAP ENDONUCLEASE 1"/>
    <property type="match status" value="1"/>
</dbReference>
<dbReference type="PANTHER" id="PTHR11081">
    <property type="entry name" value="FLAP ENDONUCLEASE FAMILY MEMBER"/>
    <property type="match status" value="1"/>
</dbReference>
<dbReference type="Pfam" id="PF00867">
    <property type="entry name" value="XPG_I"/>
    <property type="match status" value="1"/>
</dbReference>
<dbReference type="Pfam" id="PF00752">
    <property type="entry name" value="XPG_N"/>
    <property type="match status" value="1"/>
</dbReference>
<dbReference type="PRINTS" id="PR00853">
    <property type="entry name" value="XPGRADSUPER"/>
</dbReference>
<dbReference type="SMART" id="SM00279">
    <property type="entry name" value="HhH2"/>
    <property type="match status" value="1"/>
</dbReference>
<dbReference type="SMART" id="SM00484">
    <property type="entry name" value="XPGI"/>
    <property type="match status" value="1"/>
</dbReference>
<dbReference type="SMART" id="SM00485">
    <property type="entry name" value="XPGN"/>
    <property type="match status" value="1"/>
</dbReference>
<dbReference type="SUPFAM" id="SSF47807">
    <property type="entry name" value="5' to 3' exonuclease, C-terminal subdomain"/>
    <property type="match status" value="1"/>
</dbReference>
<dbReference type="SUPFAM" id="SSF88723">
    <property type="entry name" value="PIN domain-like"/>
    <property type="match status" value="1"/>
</dbReference>